<reference key="1">
    <citation type="journal article" date="2005" name="Genome Res.">
        <title>Comparative and functional genomic analyses of the pathogenicity of phytopathogen Xanthomonas campestris pv. campestris.</title>
        <authorList>
            <person name="Qian W."/>
            <person name="Jia Y."/>
            <person name="Ren S.-X."/>
            <person name="He Y.-Q."/>
            <person name="Feng J.-X."/>
            <person name="Lu L.-F."/>
            <person name="Sun Q."/>
            <person name="Ying G."/>
            <person name="Tang D.-J."/>
            <person name="Tang H."/>
            <person name="Wu W."/>
            <person name="Hao P."/>
            <person name="Wang L."/>
            <person name="Jiang B.-L."/>
            <person name="Zeng S."/>
            <person name="Gu W.-Y."/>
            <person name="Lu G."/>
            <person name="Rong L."/>
            <person name="Tian Y."/>
            <person name="Yao Z."/>
            <person name="Fu G."/>
            <person name="Chen B."/>
            <person name="Fang R."/>
            <person name="Qiang B."/>
            <person name="Chen Z."/>
            <person name="Zhao G.-P."/>
            <person name="Tang J.-L."/>
            <person name="He C."/>
        </authorList>
    </citation>
    <scope>NUCLEOTIDE SEQUENCE [LARGE SCALE GENOMIC DNA]</scope>
    <source>
        <strain>8004</strain>
    </source>
</reference>
<feature type="chain" id="PRO_0000229292" description="Ribosome maturation factor RimP">
    <location>
        <begin position="1"/>
        <end position="196"/>
    </location>
</feature>
<feature type="region of interest" description="Disordered" evidence="2">
    <location>
        <begin position="164"/>
        <end position="196"/>
    </location>
</feature>
<feature type="compositionally biased region" description="Basic residues" evidence="2">
    <location>
        <begin position="173"/>
        <end position="182"/>
    </location>
</feature>
<evidence type="ECO:0000255" key="1">
    <source>
        <dbReference type="HAMAP-Rule" id="MF_01077"/>
    </source>
</evidence>
<evidence type="ECO:0000256" key="2">
    <source>
        <dbReference type="SAM" id="MobiDB-lite"/>
    </source>
</evidence>
<keyword id="KW-0963">Cytoplasm</keyword>
<keyword id="KW-0690">Ribosome biogenesis</keyword>
<gene>
    <name evidence="1" type="primary">rimP</name>
    <name type="ordered locus">XC_1603</name>
</gene>
<sequence length="196" mass="21180">MSEKATEIANLLGPTVESLGLELLGVEYLPAPGGATLRLYIDVPLAEQPDRIINVDDCERVSREVSAQLDVEDPISGNYTLEVSSPGVDRPLFTLDQFARHVGESAKIVLKLAQDGRRRFQGQIVRIDTEAAAVVFSVDGKDVQIGFGNIDKARILPDWVALGLAPQKPNKPGPKKPGHDKKKPSNEPAAGKPRAE</sequence>
<name>RIMP_XANC8</name>
<dbReference type="EMBL" id="CP000050">
    <property type="protein sequence ID" value="AAY48669.1"/>
    <property type="molecule type" value="Genomic_DNA"/>
</dbReference>
<dbReference type="RefSeq" id="WP_011269630.1">
    <property type="nucleotide sequence ID" value="NC_007086.1"/>
</dbReference>
<dbReference type="SMR" id="Q4UWA4"/>
<dbReference type="KEGG" id="xcb:XC_1603"/>
<dbReference type="HOGENOM" id="CLU_070525_1_1_6"/>
<dbReference type="Proteomes" id="UP000000420">
    <property type="component" value="Chromosome"/>
</dbReference>
<dbReference type="GO" id="GO:0005829">
    <property type="term" value="C:cytosol"/>
    <property type="evidence" value="ECO:0007669"/>
    <property type="project" value="TreeGrafter"/>
</dbReference>
<dbReference type="GO" id="GO:0000028">
    <property type="term" value="P:ribosomal small subunit assembly"/>
    <property type="evidence" value="ECO:0007669"/>
    <property type="project" value="TreeGrafter"/>
</dbReference>
<dbReference type="GO" id="GO:0006412">
    <property type="term" value="P:translation"/>
    <property type="evidence" value="ECO:0007669"/>
    <property type="project" value="TreeGrafter"/>
</dbReference>
<dbReference type="CDD" id="cd01734">
    <property type="entry name" value="YlxS_C"/>
    <property type="match status" value="1"/>
</dbReference>
<dbReference type="FunFam" id="3.30.300.70:FF:000001">
    <property type="entry name" value="Ribosome maturation factor RimP"/>
    <property type="match status" value="1"/>
</dbReference>
<dbReference type="Gene3D" id="2.30.30.180">
    <property type="entry name" value="Ribosome maturation factor RimP, C-terminal domain"/>
    <property type="match status" value="1"/>
</dbReference>
<dbReference type="Gene3D" id="3.30.300.70">
    <property type="entry name" value="RimP-like superfamily, N-terminal"/>
    <property type="match status" value="1"/>
</dbReference>
<dbReference type="HAMAP" id="MF_01077">
    <property type="entry name" value="RimP"/>
    <property type="match status" value="1"/>
</dbReference>
<dbReference type="InterPro" id="IPR003728">
    <property type="entry name" value="Ribosome_maturation_RimP"/>
</dbReference>
<dbReference type="InterPro" id="IPR028998">
    <property type="entry name" value="RimP_C"/>
</dbReference>
<dbReference type="InterPro" id="IPR036847">
    <property type="entry name" value="RimP_C_sf"/>
</dbReference>
<dbReference type="InterPro" id="IPR028989">
    <property type="entry name" value="RimP_N"/>
</dbReference>
<dbReference type="InterPro" id="IPR035956">
    <property type="entry name" value="RimP_N_sf"/>
</dbReference>
<dbReference type="NCBIfam" id="NF000927">
    <property type="entry name" value="PRK00092.1-1"/>
    <property type="match status" value="1"/>
</dbReference>
<dbReference type="NCBIfam" id="NF000931">
    <property type="entry name" value="PRK00092.2-3"/>
    <property type="match status" value="1"/>
</dbReference>
<dbReference type="PANTHER" id="PTHR33867">
    <property type="entry name" value="RIBOSOME MATURATION FACTOR RIMP"/>
    <property type="match status" value="1"/>
</dbReference>
<dbReference type="PANTHER" id="PTHR33867:SF1">
    <property type="entry name" value="RIBOSOME MATURATION FACTOR RIMP"/>
    <property type="match status" value="1"/>
</dbReference>
<dbReference type="Pfam" id="PF17384">
    <property type="entry name" value="DUF150_C"/>
    <property type="match status" value="1"/>
</dbReference>
<dbReference type="Pfam" id="PF02576">
    <property type="entry name" value="RimP_N"/>
    <property type="match status" value="1"/>
</dbReference>
<dbReference type="SUPFAM" id="SSF74942">
    <property type="entry name" value="YhbC-like, C-terminal domain"/>
    <property type="match status" value="1"/>
</dbReference>
<dbReference type="SUPFAM" id="SSF75420">
    <property type="entry name" value="YhbC-like, N-terminal domain"/>
    <property type="match status" value="1"/>
</dbReference>
<organism>
    <name type="scientific">Xanthomonas campestris pv. campestris (strain 8004)</name>
    <dbReference type="NCBI Taxonomy" id="314565"/>
    <lineage>
        <taxon>Bacteria</taxon>
        <taxon>Pseudomonadati</taxon>
        <taxon>Pseudomonadota</taxon>
        <taxon>Gammaproteobacteria</taxon>
        <taxon>Lysobacterales</taxon>
        <taxon>Lysobacteraceae</taxon>
        <taxon>Xanthomonas</taxon>
    </lineage>
</organism>
<protein>
    <recommendedName>
        <fullName evidence="1">Ribosome maturation factor RimP</fullName>
    </recommendedName>
</protein>
<proteinExistence type="inferred from homology"/>
<accession>Q4UWA4</accession>
<comment type="function">
    <text evidence="1">Required for maturation of 30S ribosomal subunits.</text>
</comment>
<comment type="subcellular location">
    <subcellularLocation>
        <location evidence="1">Cytoplasm</location>
    </subcellularLocation>
</comment>
<comment type="similarity">
    <text evidence="1">Belongs to the RimP family.</text>
</comment>